<proteinExistence type="inferred from homology"/>
<dbReference type="EC" id="6.3.4.16" evidence="1"/>
<dbReference type="EC" id="6.3.5.5" evidence="1"/>
<dbReference type="EMBL" id="AP006716">
    <property type="protein sequence ID" value="BAE05020.1"/>
    <property type="molecule type" value="Genomic_DNA"/>
</dbReference>
<dbReference type="RefSeq" id="WP_011275996.1">
    <property type="nucleotide sequence ID" value="NC_007168.1"/>
</dbReference>
<dbReference type="SMR" id="Q4L5Q5"/>
<dbReference type="GeneID" id="93781089"/>
<dbReference type="KEGG" id="sha:SH1711"/>
<dbReference type="eggNOG" id="COG0458">
    <property type="taxonomic scope" value="Bacteria"/>
</dbReference>
<dbReference type="HOGENOM" id="CLU_000513_1_3_9"/>
<dbReference type="OrthoDB" id="9804197at2"/>
<dbReference type="UniPathway" id="UPA00068">
    <property type="reaction ID" value="UER00171"/>
</dbReference>
<dbReference type="UniPathway" id="UPA00070">
    <property type="reaction ID" value="UER00115"/>
</dbReference>
<dbReference type="Proteomes" id="UP000000543">
    <property type="component" value="Chromosome"/>
</dbReference>
<dbReference type="GO" id="GO:0005737">
    <property type="term" value="C:cytoplasm"/>
    <property type="evidence" value="ECO:0007669"/>
    <property type="project" value="TreeGrafter"/>
</dbReference>
<dbReference type="GO" id="GO:0005524">
    <property type="term" value="F:ATP binding"/>
    <property type="evidence" value="ECO:0007669"/>
    <property type="project" value="UniProtKB-UniRule"/>
</dbReference>
<dbReference type="GO" id="GO:0004087">
    <property type="term" value="F:carbamoyl-phosphate synthase (ammonia) activity"/>
    <property type="evidence" value="ECO:0007669"/>
    <property type="project" value="RHEA"/>
</dbReference>
<dbReference type="GO" id="GO:0004088">
    <property type="term" value="F:carbamoyl-phosphate synthase (glutamine-hydrolyzing) activity"/>
    <property type="evidence" value="ECO:0007669"/>
    <property type="project" value="UniProtKB-UniRule"/>
</dbReference>
<dbReference type="GO" id="GO:0046872">
    <property type="term" value="F:metal ion binding"/>
    <property type="evidence" value="ECO:0007669"/>
    <property type="project" value="UniProtKB-KW"/>
</dbReference>
<dbReference type="GO" id="GO:0044205">
    <property type="term" value="P:'de novo' UMP biosynthetic process"/>
    <property type="evidence" value="ECO:0007669"/>
    <property type="project" value="UniProtKB-UniRule"/>
</dbReference>
<dbReference type="GO" id="GO:0006541">
    <property type="term" value="P:glutamine metabolic process"/>
    <property type="evidence" value="ECO:0007669"/>
    <property type="project" value="TreeGrafter"/>
</dbReference>
<dbReference type="GO" id="GO:0006526">
    <property type="term" value="P:L-arginine biosynthetic process"/>
    <property type="evidence" value="ECO:0007669"/>
    <property type="project" value="UniProtKB-UniRule"/>
</dbReference>
<dbReference type="CDD" id="cd01424">
    <property type="entry name" value="MGS_CPS_II"/>
    <property type="match status" value="1"/>
</dbReference>
<dbReference type="FunFam" id="1.10.1030.10:FF:000002">
    <property type="entry name" value="Carbamoyl-phosphate synthase large chain"/>
    <property type="match status" value="1"/>
</dbReference>
<dbReference type="FunFam" id="3.30.1490.20:FF:000001">
    <property type="entry name" value="Carbamoyl-phosphate synthase large chain"/>
    <property type="match status" value="1"/>
</dbReference>
<dbReference type="FunFam" id="3.30.470.20:FF:000001">
    <property type="entry name" value="Carbamoyl-phosphate synthase large chain"/>
    <property type="match status" value="1"/>
</dbReference>
<dbReference type="FunFam" id="3.30.470.20:FF:000026">
    <property type="entry name" value="Carbamoyl-phosphate synthase large chain"/>
    <property type="match status" value="1"/>
</dbReference>
<dbReference type="FunFam" id="3.40.50.1380:FF:000011">
    <property type="entry name" value="Carbamoyl-phosphate synthase large chain"/>
    <property type="match status" value="1"/>
</dbReference>
<dbReference type="FunFam" id="3.40.50.20:FF:000001">
    <property type="entry name" value="Carbamoyl-phosphate synthase large chain"/>
    <property type="match status" value="2"/>
</dbReference>
<dbReference type="Gene3D" id="3.40.50.20">
    <property type="match status" value="2"/>
</dbReference>
<dbReference type="Gene3D" id="3.30.1490.20">
    <property type="entry name" value="ATP-grasp fold, A domain"/>
    <property type="match status" value="1"/>
</dbReference>
<dbReference type="Gene3D" id="3.30.470.20">
    <property type="entry name" value="ATP-grasp fold, B domain"/>
    <property type="match status" value="2"/>
</dbReference>
<dbReference type="Gene3D" id="1.10.1030.10">
    <property type="entry name" value="Carbamoyl-phosphate synthetase, large subunit oligomerisation domain"/>
    <property type="match status" value="1"/>
</dbReference>
<dbReference type="Gene3D" id="3.40.50.1380">
    <property type="entry name" value="Methylglyoxal synthase-like domain"/>
    <property type="match status" value="1"/>
</dbReference>
<dbReference type="HAMAP" id="MF_01210_A">
    <property type="entry name" value="CPSase_L_chain_A"/>
    <property type="match status" value="1"/>
</dbReference>
<dbReference type="HAMAP" id="MF_01210_B">
    <property type="entry name" value="CPSase_L_chain_B"/>
    <property type="match status" value="1"/>
</dbReference>
<dbReference type="InterPro" id="IPR011761">
    <property type="entry name" value="ATP-grasp"/>
</dbReference>
<dbReference type="InterPro" id="IPR013815">
    <property type="entry name" value="ATP_grasp_subdomain_1"/>
</dbReference>
<dbReference type="InterPro" id="IPR006275">
    <property type="entry name" value="CarbamoylP_synth_lsu"/>
</dbReference>
<dbReference type="InterPro" id="IPR005480">
    <property type="entry name" value="CarbamoylP_synth_lsu_oligo"/>
</dbReference>
<dbReference type="InterPro" id="IPR036897">
    <property type="entry name" value="CarbamoylP_synth_lsu_oligo_sf"/>
</dbReference>
<dbReference type="InterPro" id="IPR005479">
    <property type="entry name" value="CbamoylP_synth_lsu-like_ATP-bd"/>
</dbReference>
<dbReference type="InterPro" id="IPR005483">
    <property type="entry name" value="CbamoylP_synth_lsu_CPSase_dom"/>
</dbReference>
<dbReference type="InterPro" id="IPR011607">
    <property type="entry name" value="MGS-like_dom"/>
</dbReference>
<dbReference type="InterPro" id="IPR036914">
    <property type="entry name" value="MGS-like_dom_sf"/>
</dbReference>
<dbReference type="InterPro" id="IPR033937">
    <property type="entry name" value="MGS_CPS_CarB"/>
</dbReference>
<dbReference type="InterPro" id="IPR016185">
    <property type="entry name" value="PreATP-grasp_dom_sf"/>
</dbReference>
<dbReference type="NCBIfam" id="TIGR01369">
    <property type="entry name" value="CPSaseII_lrg"/>
    <property type="match status" value="1"/>
</dbReference>
<dbReference type="NCBIfam" id="NF003671">
    <property type="entry name" value="PRK05294.1"/>
    <property type="match status" value="1"/>
</dbReference>
<dbReference type="NCBIfam" id="NF009455">
    <property type="entry name" value="PRK12815.1"/>
    <property type="match status" value="1"/>
</dbReference>
<dbReference type="PANTHER" id="PTHR11405:SF53">
    <property type="entry name" value="CARBAMOYL-PHOSPHATE SYNTHASE [AMMONIA], MITOCHONDRIAL"/>
    <property type="match status" value="1"/>
</dbReference>
<dbReference type="PANTHER" id="PTHR11405">
    <property type="entry name" value="CARBAMOYLTRANSFERASE FAMILY MEMBER"/>
    <property type="match status" value="1"/>
</dbReference>
<dbReference type="Pfam" id="PF02786">
    <property type="entry name" value="CPSase_L_D2"/>
    <property type="match status" value="2"/>
</dbReference>
<dbReference type="Pfam" id="PF02787">
    <property type="entry name" value="CPSase_L_D3"/>
    <property type="match status" value="1"/>
</dbReference>
<dbReference type="Pfam" id="PF02142">
    <property type="entry name" value="MGS"/>
    <property type="match status" value="1"/>
</dbReference>
<dbReference type="PRINTS" id="PR00098">
    <property type="entry name" value="CPSASE"/>
</dbReference>
<dbReference type="SMART" id="SM01096">
    <property type="entry name" value="CPSase_L_D3"/>
    <property type="match status" value="1"/>
</dbReference>
<dbReference type="SMART" id="SM01209">
    <property type="entry name" value="GARS_A"/>
    <property type="match status" value="1"/>
</dbReference>
<dbReference type="SMART" id="SM00851">
    <property type="entry name" value="MGS"/>
    <property type="match status" value="1"/>
</dbReference>
<dbReference type="SUPFAM" id="SSF48108">
    <property type="entry name" value="Carbamoyl phosphate synthetase, large subunit connection domain"/>
    <property type="match status" value="1"/>
</dbReference>
<dbReference type="SUPFAM" id="SSF56059">
    <property type="entry name" value="Glutathione synthetase ATP-binding domain-like"/>
    <property type="match status" value="2"/>
</dbReference>
<dbReference type="SUPFAM" id="SSF52335">
    <property type="entry name" value="Methylglyoxal synthase-like"/>
    <property type="match status" value="1"/>
</dbReference>
<dbReference type="SUPFAM" id="SSF52440">
    <property type="entry name" value="PreATP-grasp domain"/>
    <property type="match status" value="2"/>
</dbReference>
<dbReference type="PROSITE" id="PS50975">
    <property type="entry name" value="ATP_GRASP"/>
    <property type="match status" value="2"/>
</dbReference>
<dbReference type="PROSITE" id="PS00866">
    <property type="entry name" value="CPSASE_1"/>
    <property type="match status" value="2"/>
</dbReference>
<dbReference type="PROSITE" id="PS00867">
    <property type="entry name" value="CPSASE_2"/>
    <property type="match status" value="2"/>
</dbReference>
<dbReference type="PROSITE" id="PS51855">
    <property type="entry name" value="MGS"/>
    <property type="match status" value="1"/>
</dbReference>
<keyword id="KW-0028">Amino-acid biosynthesis</keyword>
<keyword id="KW-0055">Arginine biosynthesis</keyword>
<keyword id="KW-0067">ATP-binding</keyword>
<keyword id="KW-0436">Ligase</keyword>
<keyword id="KW-0460">Magnesium</keyword>
<keyword id="KW-0464">Manganese</keyword>
<keyword id="KW-0479">Metal-binding</keyword>
<keyword id="KW-0547">Nucleotide-binding</keyword>
<keyword id="KW-0665">Pyrimidine biosynthesis</keyword>
<keyword id="KW-0677">Repeat</keyword>
<gene>
    <name evidence="1" type="primary">carB</name>
    <name type="ordered locus">SH1711</name>
</gene>
<reference key="1">
    <citation type="journal article" date="2005" name="J. Bacteriol.">
        <title>Whole-genome sequencing of Staphylococcus haemolyticus uncovers the extreme plasticity of its genome and the evolution of human-colonizing staphylococcal species.</title>
        <authorList>
            <person name="Takeuchi F."/>
            <person name="Watanabe S."/>
            <person name="Baba T."/>
            <person name="Yuzawa H."/>
            <person name="Ito T."/>
            <person name="Morimoto Y."/>
            <person name="Kuroda M."/>
            <person name="Cui L."/>
            <person name="Takahashi M."/>
            <person name="Ankai A."/>
            <person name="Baba S."/>
            <person name="Fukui S."/>
            <person name="Lee J.C."/>
            <person name="Hiramatsu K."/>
        </authorList>
    </citation>
    <scope>NUCLEOTIDE SEQUENCE [LARGE SCALE GENOMIC DNA]</scope>
    <source>
        <strain>JCSC1435</strain>
    </source>
</reference>
<evidence type="ECO:0000255" key="1">
    <source>
        <dbReference type="HAMAP-Rule" id="MF_01210"/>
    </source>
</evidence>
<name>CARB_STAHJ</name>
<sequence length="1057" mass="117027">MPKRDDIQTILVIGSGPIIIGQAAEFDYAGTQACLALKEEGYRVILVNSNPATIMTDKEIADKVYIEPLTHDFIARIIRKEQPDALLPTLGGQTGLNMAIQLHDSGVLEANNVKLLGTELKSIQQAEDRELFRSLMNDLNVPVPESDIVNTVEQAFAFKDEVGYPLIVRPAFTMGGTGGGICYNDEELKEVVSNGLHYSPATQCLIEKSIAGYKEIEYEVMRDKNDNAIVVCNMENIDPVGIHTGDSIVVAPSQTLSDVEYQMLRDVSLKVIRALGIEGGCNVQLALDPHSFNYYIIEVNPRVSRSSALASKATGYPIAKLAAKIAVGLTLDEMLNPVTGTSYAAFEPTLDYVISKIPRFPFDKFEKGERELGTQMKATGEVMAIGRTYEESLLKAIRSLEYGVHHLGLPNGESFDLDYIKERISHQDDERLFFIGEAIRRGTTLEEIHNMTQIDYFFLNKFQNIINIEHELKNHPGDLDYLKYAKDYGFSDRVIAHRFGMTESEVYQLRQDNNIKPVYKMVDTCAAEFESTTPYYYGTYETENESIVTDKEKILVLGSGPIRIGQGVEFDYATVHAVWAIQNAGYEAIIVNNNPETVSTDFSISDKLYFEPLTEEDVMNIINLEQPKGVVVQFGGQTAINLADKLAKHGVKILGTTLENLNRAEDRKEFEALLHTIDVPQPKGKTATSPKEALENAREIGYPVVVRPSYVLGGRAMEIVNSDAELENYMEQAVKASPEHPVLVDRYLTGKEIEVDAISDGETVIIPGIMEHIERAGVHSGDSIAVYPPQTLSQEDIDTLEDYTIKLAKGLNIVGLINIQFVIAHDGVYVLEVNPRASRTVPFLSKITDIQMAQLAMQAIMGTRLKDLGYKQGVQPYSEGVFVKAPVFSFNKLKNVDVTLGPEMKSTGEVMGKDLTLEKALYKGLTGSGVEVKDHGTVLMTVSDKDKDEIVKIAHRLNEVGYKILATQGTAEKLKEDNIPVEVVGKIGGDDDLLTRIQNGEVQIVINTMTKGKEVERDGFQIRRTTVENGVPCLTSLDTANALTNVIESMTFSMRTM</sequence>
<protein>
    <recommendedName>
        <fullName evidence="1">Carbamoyl phosphate synthase large chain</fullName>
        <ecNumber evidence="1">6.3.4.16</ecNumber>
        <ecNumber evidence="1">6.3.5.5</ecNumber>
    </recommendedName>
    <alternativeName>
        <fullName evidence="1">Carbamoyl phosphate synthetase ammonia chain</fullName>
    </alternativeName>
</protein>
<comment type="function">
    <text evidence="1">Large subunit of the glutamine-dependent carbamoyl phosphate synthetase (CPSase). CPSase catalyzes the formation of carbamoyl phosphate from the ammonia moiety of glutamine, carbonate, and phosphate donated by ATP, constituting the first step of 2 biosynthetic pathways, one leading to arginine and/or urea and the other to pyrimidine nucleotides. The large subunit (synthetase) binds the substrates ammonia (free or transferred from glutamine from the small subunit), hydrogencarbonate and ATP and carries out an ATP-coupled ligase reaction, activating hydrogencarbonate by forming carboxy phosphate which reacts with ammonia to form carbamoyl phosphate.</text>
</comment>
<comment type="catalytic activity">
    <reaction evidence="1">
        <text>hydrogencarbonate + L-glutamine + 2 ATP + H2O = carbamoyl phosphate + L-glutamate + 2 ADP + phosphate + 2 H(+)</text>
        <dbReference type="Rhea" id="RHEA:18633"/>
        <dbReference type="ChEBI" id="CHEBI:15377"/>
        <dbReference type="ChEBI" id="CHEBI:15378"/>
        <dbReference type="ChEBI" id="CHEBI:17544"/>
        <dbReference type="ChEBI" id="CHEBI:29985"/>
        <dbReference type="ChEBI" id="CHEBI:30616"/>
        <dbReference type="ChEBI" id="CHEBI:43474"/>
        <dbReference type="ChEBI" id="CHEBI:58228"/>
        <dbReference type="ChEBI" id="CHEBI:58359"/>
        <dbReference type="ChEBI" id="CHEBI:456216"/>
        <dbReference type="EC" id="6.3.5.5"/>
    </reaction>
</comment>
<comment type="catalytic activity">
    <molecule>Carbamoyl phosphate synthase large chain</molecule>
    <reaction evidence="1">
        <text>hydrogencarbonate + NH4(+) + 2 ATP = carbamoyl phosphate + 2 ADP + phosphate + 2 H(+)</text>
        <dbReference type="Rhea" id="RHEA:18029"/>
        <dbReference type="ChEBI" id="CHEBI:15378"/>
        <dbReference type="ChEBI" id="CHEBI:17544"/>
        <dbReference type="ChEBI" id="CHEBI:28938"/>
        <dbReference type="ChEBI" id="CHEBI:30616"/>
        <dbReference type="ChEBI" id="CHEBI:43474"/>
        <dbReference type="ChEBI" id="CHEBI:58228"/>
        <dbReference type="ChEBI" id="CHEBI:456216"/>
        <dbReference type="EC" id="6.3.4.16"/>
    </reaction>
</comment>
<comment type="cofactor">
    <cofactor evidence="1">
        <name>Mg(2+)</name>
        <dbReference type="ChEBI" id="CHEBI:18420"/>
    </cofactor>
    <cofactor evidence="1">
        <name>Mn(2+)</name>
        <dbReference type="ChEBI" id="CHEBI:29035"/>
    </cofactor>
    <text evidence="1">Binds 4 Mg(2+) or Mn(2+) ions per subunit.</text>
</comment>
<comment type="pathway">
    <text evidence="1">Amino-acid biosynthesis; L-arginine biosynthesis; carbamoyl phosphate from bicarbonate: step 1/1.</text>
</comment>
<comment type="pathway">
    <text evidence="1">Pyrimidine metabolism; UMP biosynthesis via de novo pathway; (S)-dihydroorotate from bicarbonate: step 1/3.</text>
</comment>
<comment type="subunit">
    <text evidence="1">Composed of two chains; the small (or glutamine) chain promotes the hydrolysis of glutamine to ammonia, which is used by the large (or ammonia) chain to synthesize carbamoyl phosphate. Tetramer of heterodimers (alpha,beta)4.</text>
</comment>
<comment type="domain">
    <text evidence="1">The large subunit is composed of 2 ATP-grasp domains that are involved in binding the 2 ATP molecules needed for carbamoyl phosphate synthesis. The N-terminal ATP-grasp domain (referred to as the carboxyphosphate synthetic component) catalyzes the ATP-dependent phosphorylation of hydrogencarbonate to carboxyphosphate and the subsequent nucleophilic attack by ammonia to form a carbamate intermediate. The C-terminal ATP-grasp domain (referred to as the carbamoyl phosphate synthetic component) then catalyzes the phosphorylation of carbamate with the second ATP to form the end product carbamoyl phosphate. The reactive and unstable enzyme intermediates are sequentially channeled from one active site to the next through the interior of the protein over a distance of at least 96 A.</text>
</comment>
<comment type="similarity">
    <text evidence="1">Belongs to the CarB family.</text>
</comment>
<feature type="chain" id="PRO_0000145045" description="Carbamoyl phosphate synthase large chain">
    <location>
        <begin position="1"/>
        <end position="1057"/>
    </location>
</feature>
<feature type="domain" description="ATP-grasp 1" evidence="1">
    <location>
        <begin position="133"/>
        <end position="327"/>
    </location>
</feature>
<feature type="domain" description="ATP-grasp 2" evidence="1">
    <location>
        <begin position="671"/>
        <end position="861"/>
    </location>
</feature>
<feature type="domain" description="MGS-like" evidence="1">
    <location>
        <begin position="930"/>
        <end position="1057"/>
    </location>
</feature>
<feature type="region of interest" description="Carboxyphosphate synthetic domain" evidence="1">
    <location>
        <begin position="1"/>
        <end position="401"/>
    </location>
</feature>
<feature type="region of interest" description="Oligomerization domain" evidence="1">
    <location>
        <begin position="402"/>
        <end position="546"/>
    </location>
</feature>
<feature type="region of interest" description="Carbamoyl phosphate synthetic domain" evidence="1">
    <location>
        <begin position="547"/>
        <end position="929"/>
    </location>
</feature>
<feature type="region of interest" description="Allosteric domain" evidence="1">
    <location>
        <begin position="930"/>
        <end position="1057"/>
    </location>
</feature>
<feature type="binding site" evidence="1">
    <location>
        <position position="129"/>
    </location>
    <ligand>
        <name>ATP</name>
        <dbReference type="ChEBI" id="CHEBI:30616"/>
        <label>1</label>
    </ligand>
</feature>
<feature type="binding site" evidence="1">
    <location>
        <position position="169"/>
    </location>
    <ligand>
        <name>ATP</name>
        <dbReference type="ChEBI" id="CHEBI:30616"/>
        <label>1</label>
    </ligand>
</feature>
<feature type="binding site" evidence="1">
    <location>
        <position position="175"/>
    </location>
    <ligand>
        <name>ATP</name>
        <dbReference type="ChEBI" id="CHEBI:30616"/>
        <label>1</label>
    </ligand>
</feature>
<feature type="binding site" evidence="1">
    <location>
        <position position="176"/>
    </location>
    <ligand>
        <name>ATP</name>
        <dbReference type="ChEBI" id="CHEBI:30616"/>
        <label>1</label>
    </ligand>
</feature>
<feature type="binding site" evidence="1">
    <location>
        <position position="208"/>
    </location>
    <ligand>
        <name>ATP</name>
        <dbReference type="ChEBI" id="CHEBI:30616"/>
        <label>1</label>
    </ligand>
</feature>
<feature type="binding site" evidence="1">
    <location>
        <position position="210"/>
    </location>
    <ligand>
        <name>ATP</name>
        <dbReference type="ChEBI" id="CHEBI:30616"/>
        <label>1</label>
    </ligand>
</feature>
<feature type="binding site" evidence="1">
    <location>
        <position position="215"/>
    </location>
    <ligand>
        <name>ATP</name>
        <dbReference type="ChEBI" id="CHEBI:30616"/>
        <label>1</label>
    </ligand>
</feature>
<feature type="binding site" evidence="1">
    <location>
        <position position="241"/>
    </location>
    <ligand>
        <name>ATP</name>
        <dbReference type="ChEBI" id="CHEBI:30616"/>
        <label>1</label>
    </ligand>
</feature>
<feature type="binding site" evidence="1">
    <location>
        <position position="242"/>
    </location>
    <ligand>
        <name>ATP</name>
        <dbReference type="ChEBI" id="CHEBI:30616"/>
        <label>1</label>
    </ligand>
</feature>
<feature type="binding site" evidence="1">
    <location>
        <position position="243"/>
    </location>
    <ligand>
        <name>ATP</name>
        <dbReference type="ChEBI" id="CHEBI:30616"/>
        <label>1</label>
    </ligand>
</feature>
<feature type="binding site" evidence="1">
    <location>
        <position position="284"/>
    </location>
    <ligand>
        <name>ATP</name>
        <dbReference type="ChEBI" id="CHEBI:30616"/>
        <label>1</label>
    </ligand>
</feature>
<feature type="binding site" evidence="1">
    <location>
        <position position="284"/>
    </location>
    <ligand>
        <name>Mg(2+)</name>
        <dbReference type="ChEBI" id="CHEBI:18420"/>
        <label>1</label>
    </ligand>
</feature>
<feature type="binding site" evidence="1">
    <location>
        <position position="284"/>
    </location>
    <ligand>
        <name>Mn(2+)</name>
        <dbReference type="ChEBI" id="CHEBI:29035"/>
        <label>1</label>
    </ligand>
</feature>
<feature type="binding site" evidence="1">
    <location>
        <position position="298"/>
    </location>
    <ligand>
        <name>ATP</name>
        <dbReference type="ChEBI" id="CHEBI:30616"/>
        <label>1</label>
    </ligand>
</feature>
<feature type="binding site" evidence="1">
    <location>
        <position position="298"/>
    </location>
    <ligand>
        <name>Mg(2+)</name>
        <dbReference type="ChEBI" id="CHEBI:18420"/>
        <label>1</label>
    </ligand>
</feature>
<feature type="binding site" evidence="1">
    <location>
        <position position="298"/>
    </location>
    <ligand>
        <name>Mg(2+)</name>
        <dbReference type="ChEBI" id="CHEBI:18420"/>
        <label>2</label>
    </ligand>
</feature>
<feature type="binding site" evidence="1">
    <location>
        <position position="298"/>
    </location>
    <ligand>
        <name>Mn(2+)</name>
        <dbReference type="ChEBI" id="CHEBI:29035"/>
        <label>1</label>
    </ligand>
</feature>
<feature type="binding site" evidence="1">
    <location>
        <position position="298"/>
    </location>
    <ligand>
        <name>Mn(2+)</name>
        <dbReference type="ChEBI" id="CHEBI:29035"/>
        <label>2</label>
    </ligand>
</feature>
<feature type="binding site" evidence="1">
    <location>
        <position position="300"/>
    </location>
    <ligand>
        <name>Mg(2+)</name>
        <dbReference type="ChEBI" id="CHEBI:18420"/>
        <label>2</label>
    </ligand>
</feature>
<feature type="binding site" evidence="1">
    <location>
        <position position="300"/>
    </location>
    <ligand>
        <name>Mn(2+)</name>
        <dbReference type="ChEBI" id="CHEBI:29035"/>
        <label>2</label>
    </ligand>
</feature>
<feature type="binding site" evidence="1">
    <location>
        <position position="707"/>
    </location>
    <ligand>
        <name>ATP</name>
        <dbReference type="ChEBI" id="CHEBI:30616"/>
        <label>2</label>
    </ligand>
</feature>
<feature type="binding site" evidence="1">
    <location>
        <position position="746"/>
    </location>
    <ligand>
        <name>ATP</name>
        <dbReference type="ChEBI" id="CHEBI:30616"/>
        <label>2</label>
    </ligand>
</feature>
<feature type="binding site" evidence="1">
    <location>
        <position position="748"/>
    </location>
    <ligand>
        <name>ATP</name>
        <dbReference type="ChEBI" id="CHEBI:30616"/>
        <label>2</label>
    </ligand>
</feature>
<feature type="binding site" evidence="1">
    <location>
        <position position="752"/>
    </location>
    <ligand>
        <name>ATP</name>
        <dbReference type="ChEBI" id="CHEBI:30616"/>
        <label>2</label>
    </ligand>
</feature>
<feature type="binding site" evidence="1">
    <location>
        <position position="777"/>
    </location>
    <ligand>
        <name>ATP</name>
        <dbReference type="ChEBI" id="CHEBI:30616"/>
        <label>2</label>
    </ligand>
</feature>
<feature type="binding site" evidence="1">
    <location>
        <position position="778"/>
    </location>
    <ligand>
        <name>ATP</name>
        <dbReference type="ChEBI" id="CHEBI:30616"/>
        <label>2</label>
    </ligand>
</feature>
<feature type="binding site" evidence="1">
    <location>
        <position position="779"/>
    </location>
    <ligand>
        <name>ATP</name>
        <dbReference type="ChEBI" id="CHEBI:30616"/>
        <label>2</label>
    </ligand>
</feature>
<feature type="binding site" evidence="1">
    <location>
        <position position="780"/>
    </location>
    <ligand>
        <name>ATP</name>
        <dbReference type="ChEBI" id="CHEBI:30616"/>
        <label>2</label>
    </ligand>
</feature>
<feature type="binding site" evidence="1">
    <location>
        <position position="820"/>
    </location>
    <ligand>
        <name>ATP</name>
        <dbReference type="ChEBI" id="CHEBI:30616"/>
        <label>2</label>
    </ligand>
</feature>
<feature type="binding site" evidence="1">
    <location>
        <position position="820"/>
    </location>
    <ligand>
        <name>Mg(2+)</name>
        <dbReference type="ChEBI" id="CHEBI:18420"/>
        <label>3</label>
    </ligand>
</feature>
<feature type="binding site" evidence="1">
    <location>
        <position position="820"/>
    </location>
    <ligand>
        <name>Mn(2+)</name>
        <dbReference type="ChEBI" id="CHEBI:29035"/>
        <label>3</label>
    </ligand>
</feature>
<feature type="binding site" evidence="1">
    <location>
        <position position="832"/>
    </location>
    <ligand>
        <name>ATP</name>
        <dbReference type="ChEBI" id="CHEBI:30616"/>
        <label>2</label>
    </ligand>
</feature>
<feature type="binding site" evidence="1">
    <location>
        <position position="832"/>
    </location>
    <ligand>
        <name>Mg(2+)</name>
        <dbReference type="ChEBI" id="CHEBI:18420"/>
        <label>3</label>
    </ligand>
</feature>
<feature type="binding site" evidence="1">
    <location>
        <position position="832"/>
    </location>
    <ligand>
        <name>Mg(2+)</name>
        <dbReference type="ChEBI" id="CHEBI:18420"/>
        <label>4</label>
    </ligand>
</feature>
<feature type="binding site" evidence="1">
    <location>
        <position position="832"/>
    </location>
    <ligand>
        <name>Mn(2+)</name>
        <dbReference type="ChEBI" id="CHEBI:29035"/>
        <label>3</label>
    </ligand>
</feature>
<feature type="binding site" evidence="1">
    <location>
        <position position="832"/>
    </location>
    <ligand>
        <name>Mn(2+)</name>
        <dbReference type="ChEBI" id="CHEBI:29035"/>
        <label>4</label>
    </ligand>
</feature>
<feature type="binding site" evidence="1">
    <location>
        <position position="834"/>
    </location>
    <ligand>
        <name>Mg(2+)</name>
        <dbReference type="ChEBI" id="CHEBI:18420"/>
        <label>4</label>
    </ligand>
</feature>
<feature type="binding site" evidence="1">
    <location>
        <position position="834"/>
    </location>
    <ligand>
        <name>Mn(2+)</name>
        <dbReference type="ChEBI" id="CHEBI:29035"/>
        <label>4</label>
    </ligand>
</feature>
<accession>Q4L5Q5</accession>
<organism>
    <name type="scientific">Staphylococcus haemolyticus (strain JCSC1435)</name>
    <dbReference type="NCBI Taxonomy" id="279808"/>
    <lineage>
        <taxon>Bacteria</taxon>
        <taxon>Bacillati</taxon>
        <taxon>Bacillota</taxon>
        <taxon>Bacilli</taxon>
        <taxon>Bacillales</taxon>
        <taxon>Staphylococcaceae</taxon>
        <taxon>Staphylococcus</taxon>
    </lineage>
</organism>